<name>DDL_ERWT9</name>
<evidence type="ECO:0000250" key="1"/>
<evidence type="ECO:0000255" key="2">
    <source>
        <dbReference type="HAMAP-Rule" id="MF_00047"/>
    </source>
</evidence>
<reference key="1">
    <citation type="journal article" date="2008" name="Environ. Microbiol.">
        <title>The genome of Erwinia tasmaniensis strain Et1/99, a non-pathogenic bacterium in the genus Erwinia.</title>
        <authorList>
            <person name="Kube M."/>
            <person name="Migdoll A.M."/>
            <person name="Mueller I."/>
            <person name="Kuhl H."/>
            <person name="Beck A."/>
            <person name="Reinhardt R."/>
            <person name="Geider K."/>
        </authorList>
    </citation>
    <scope>NUCLEOTIDE SEQUENCE [LARGE SCALE GENOMIC DNA]</scope>
    <source>
        <strain>DSM 17950 / CFBP 7177 / CIP 109463 / NCPPB 4357 / Et1/99</strain>
    </source>
</reference>
<proteinExistence type="inferred from homology"/>
<keyword id="KW-0067">ATP-binding</keyword>
<keyword id="KW-0133">Cell shape</keyword>
<keyword id="KW-0961">Cell wall biogenesis/degradation</keyword>
<keyword id="KW-0963">Cytoplasm</keyword>
<keyword id="KW-0436">Ligase</keyword>
<keyword id="KW-0460">Magnesium</keyword>
<keyword id="KW-0464">Manganese</keyword>
<keyword id="KW-0479">Metal-binding</keyword>
<keyword id="KW-0547">Nucleotide-binding</keyword>
<keyword id="KW-0573">Peptidoglycan synthesis</keyword>
<keyword id="KW-1185">Reference proteome</keyword>
<organism>
    <name type="scientific">Erwinia tasmaniensis (strain DSM 17950 / CFBP 7177 / CIP 109463 / NCPPB 4357 / Et1/99)</name>
    <dbReference type="NCBI Taxonomy" id="465817"/>
    <lineage>
        <taxon>Bacteria</taxon>
        <taxon>Pseudomonadati</taxon>
        <taxon>Pseudomonadota</taxon>
        <taxon>Gammaproteobacteria</taxon>
        <taxon>Enterobacterales</taxon>
        <taxon>Erwiniaceae</taxon>
        <taxon>Erwinia</taxon>
    </lineage>
</organism>
<dbReference type="EC" id="6.3.2.4" evidence="2"/>
<dbReference type="EMBL" id="CU468135">
    <property type="protein sequence ID" value="CAO95803.1"/>
    <property type="molecule type" value="Genomic_DNA"/>
</dbReference>
<dbReference type="RefSeq" id="WP_012440505.1">
    <property type="nucleotide sequence ID" value="NC_010694.1"/>
</dbReference>
<dbReference type="SMR" id="B2VD93"/>
<dbReference type="STRING" id="465817.ETA_07570"/>
<dbReference type="KEGG" id="eta:ETA_07570"/>
<dbReference type="eggNOG" id="COG1181">
    <property type="taxonomic scope" value="Bacteria"/>
</dbReference>
<dbReference type="HOGENOM" id="CLU_039268_1_2_6"/>
<dbReference type="OrthoDB" id="9813261at2"/>
<dbReference type="UniPathway" id="UPA00219"/>
<dbReference type="Proteomes" id="UP000001726">
    <property type="component" value="Chromosome"/>
</dbReference>
<dbReference type="GO" id="GO:0005829">
    <property type="term" value="C:cytosol"/>
    <property type="evidence" value="ECO:0007669"/>
    <property type="project" value="TreeGrafter"/>
</dbReference>
<dbReference type="GO" id="GO:0005524">
    <property type="term" value="F:ATP binding"/>
    <property type="evidence" value="ECO:0007669"/>
    <property type="project" value="UniProtKB-KW"/>
</dbReference>
<dbReference type="GO" id="GO:0008716">
    <property type="term" value="F:D-alanine-D-alanine ligase activity"/>
    <property type="evidence" value="ECO:0007669"/>
    <property type="project" value="UniProtKB-UniRule"/>
</dbReference>
<dbReference type="GO" id="GO:0046872">
    <property type="term" value="F:metal ion binding"/>
    <property type="evidence" value="ECO:0007669"/>
    <property type="project" value="UniProtKB-KW"/>
</dbReference>
<dbReference type="GO" id="GO:0071555">
    <property type="term" value="P:cell wall organization"/>
    <property type="evidence" value="ECO:0007669"/>
    <property type="project" value="UniProtKB-KW"/>
</dbReference>
<dbReference type="GO" id="GO:0009252">
    <property type="term" value="P:peptidoglycan biosynthetic process"/>
    <property type="evidence" value="ECO:0007669"/>
    <property type="project" value="UniProtKB-UniRule"/>
</dbReference>
<dbReference type="GO" id="GO:0008360">
    <property type="term" value="P:regulation of cell shape"/>
    <property type="evidence" value="ECO:0007669"/>
    <property type="project" value="UniProtKB-KW"/>
</dbReference>
<dbReference type="FunFam" id="3.30.1490.20:FF:000007">
    <property type="entry name" value="D-alanine--D-alanine ligase"/>
    <property type="match status" value="1"/>
</dbReference>
<dbReference type="FunFam" id="3.30.470.20:FF:000008">
    <property type="entry name" value="D-alanine--D-alanine ligase"/>
    <property type="match status" value="1"/>
</dbReference>
<dbReference type="FunFam" id="3.40.50.20:FF:000013">
    <property type="entry name" value="D-alanine--D-alanine ligase"/>
    <property type="match status" value="1"/>
</dbReference>
<dbReference type="Gene3D" id="3.40.50.20">
    <property type="match status" value="1"/>
</dbReference>
<dbReference type="Gene3D" id="3.30.1490.20">
    <property type="entry name" value="ATP-grasp fold, A domain"/>
    <property type="match status" value="1"/>
</dbReference>
<dbReference type="Gene3D" id="3.30.470.20">
    <property type="entry name" value="ATP-grasp fold, B domain"/>
    <property type="match status" value="1"/>
</dbReference>
<dbReference type="HAMAP" id="MF_00047">
    <property type="entry name" value="Dala_Dala_lig"/>
    <property type="match status" value="1"/>
</dbReference>
<dbReference type="InterPro" id="IPR011761">
    <property type="entry name" value="ATP-grasp"/>
</dbReference>
<dbReference type="InterPro" id="IPR013815">
    <property type="entry name" value="ATP_grasp_subdomain_1"/>
</dbReference>
<dbReference type="InterPro" id="IPR000291">
    <property type="entry name" value="D-Ala_lig_Van_CS"/>
</dbReference>
<dbReference type="InterPro" id="IPR005905">
    <property type="entry name" value="D_ala_D_ala"/>
</dbReference>
<dbReference type="InterPro" id="IPR011095">
    <property type="entry name" value="Dala_Dala_lig_C"/>
</dbReference>
<dbReference type="InterPro" id="IPR011127">
    <property type="entry name" value="Dala_Dala_lig_N"/>
</dbReference>
<dbReference type="InterPro" id="IPR016185">
    <property type="entry name" value="PreATP-grasp_dom_sf"/>
</dbReference>
<dbReference type="NCBIfam" id="TIGR01205">
    <property type="entry name" value="D_ala_D_alaTIGR"/>
    <property type="match status" value="1"/>
</dbReference>
<dbReference type="NCBIfam" id="NF002378">
    <property type="entry name" value="PRK01372.1"/>
    <property type="match status" value="1"/>
</dbReference>
<dbReference type="PANTHER" id="PTHR23132">
    <property type="entry name" value="D-ALANINE--D-ALANINE LIGASE"/>
    <property type="match status" value="1"/>
</dbReference>
<dbReference type="PANTHER" id="PTHR23132:SF23">
    <property type="entry name" value="D-ALANINE--D-ALANINE LIGASE B"/>
    <property type="match status" value="1"/>
</dbReference>
<dbReference type="Pfam" id="PF07478">
    <property type="entry name" value="Dala_Dala_lig_C"/>
    <property type="match status" value="1"/>
</dbReference>
<dbReference type="Pfam" id="PF01820">
    <property type="entry name" value="Dala_Dala_lig_N"/>
    <property type="match status" value="1"/>
</dbReference>
<dbReference type="PIRSF" id="PIRSF039102">
    <property type="entry name" value="Ddl/VanB"/>
    <property type="match status" value="1"/>
</dbReference>
<dbReference type="SUPFAM" id="SSF56059">
    <property type="entry name" value="Glutathione synthetase ATP-binding domain-like"/>
    <property type="match status" value="1"/>
</dbReference>
<dbReference type="SUPFAM" id="SSF52440">
    <property type="entry name" value="PreATP-grasp domain"/>
    <property type="match status" value="1"/>
</dbReference>
<dbReference type="PROSITE" id="PS50975">
    <property type="entry name" value="ATP_GRASP"/>
    <property type="match status" value="1"/>
</dbReference>
<dbReference type="PROSITE" id="PS00843">
    <property type="entry name" value="DALA_DALA_LIGASE_1"/>
    <property type="match status" value="1"/>
</dbReference>
<dbReference type="PROSITE" id="PS00844">
    <property type="entry name" value="DALA_DALA_LIGASE_2"/>
    <property type="match status" value="1"/>
</dbReference>
<accession>B2VD93</accession>
<gene>
    <name evidence="2" type="primary">ddl</name>
    <name type="ordered locus">ETA_07570</name>
</gene>
<protein>
    <recommendedName>
        <fullName evidence="2">D-alanine--D-alanine ligase</fullName>
        <ecNumber evidence="2">6.3.2.4</ecNumber>
    </recommendedName>
    <alternativeName>
        <fullName evidence="2">D-Ala-D-Ala ligase</fullName>
    </alternativeName>
    <alternativeName>
        <fullName evidence="2">D-alanylalanine synthetase</fullName>
    </alternativeName>
</protein>
<sequence length="306" mass="32746">MAEKVAVLLGGTSAERDVSLLSGAAVLKGLKEAGIDAHAIDIRDFPAMRLKEEGFDKAFIALHGRGGEDGTLQGVLEFLAIPYTGSGVMASAITMDKLRSKYLWQGCGLPVSPFVALNRAQMDAGLDAQLMTSIDALGLPLFVKPSREGSSVGISRVNQASELQAALQEAFRFDDEVLVEAFLSGPEYTVGVIGTDILPSIRIQTASEFYDYDAKYLSDETQYFCPSGLSADQEAELRELTIAAWRALGCSGWGRVDVMMGADGQFYLLEVNTSPGMTSHSLVPMAANQAGMSFSQLVARILELAD</sequence>
<comment type="function">
    <text evidence="2">Cell wall formation.</text>
</comment>
<comment type="catalytic activity">
    <reaction evidence="2">
        <text>2 D-alanine + ATP = D-alanyl-D-alanine + ADP + phosphate + H(+)</text>
        <dbReference type="Rhea" id="RHEA:11224"/>
        <dbReference type="ChEBI" id="CHEBI:15378"/>
        <dbReference type="ChEBI" id="CHEBI:30616"/>
        <dbReference type="ChEBI" id="CHEBI:43474"/>
        <dbReference type="ChEBI" id="CHEBI:57416"/>
        <dbReference type="ChEBI" id="CHEBI:57822"/>
        <dbReference type="ChEBI" id="CHEBI:456216"/>
        <dbReference type="EC" id="6.3.2.4"/>
    </reaction>
</comment>
<comment type="cofactor">
    <cofactor evidence="1">
        <name>Mg(2+)</name>
        <dbReference type="ChEBI" id="CHEBI:18420"/>
    </cofactor>
    <cofactor evidence="1">
        <name>Mn(2+)</name>
        <dbReference type="ChEBI" id="CHEBI:29035"/>
    </cofactor>
    <text evidence="1">Binds 2 magnesium or manganese ions per subunit.</text>
</comment>
<comment type="pathway">
    <text evidence="2">Cell wall biogenesis; peptidoglycan biosynthesis.</text>
</comment>
<comment type="subcellular location">
    <subcellularLocation>
        <location evidence="2">Cytoplasm</location>
    </subcellularLocation>
</comment>
<comment type="similarity">
    <text evidence="2">Belongs to the D-alanine--D-alanine ligase family.</text>
</comment>
<feature type="chain" id="PRO_1000091182" description="D-alanine--D-alanine ligase">
    <location>
        <begin position="1"/>
        <end position="306"/>
    </location>
</feature>
<feature type="domain" description="ATP-grasp" evidence="2">
    <location>
        <begin position="101"/>
        <end position="303"/>
    </location>
</feature>
<feature type="binding site" evidence="2">
    <location>
        <begin position="134"/>
        <end position="189"/>
    </location>
    <ligand>
        <name>ATP</name>
        <dbReference type="ChEBI" id="CHEBI:30616"/>
    </ligand>
</feature>
<feature type="binding site" evidence="2">
    <location>
        <position position="257"/>
    </location>
    <ligand>
        <name>Mg(2+)</name>
        <dbReference type="ChEBI" id="CHEBI:18420"/>
        <label>1</label>
    </ligand>
</feature>
<feature type="binding site" evidence="2">
    <location>
        <position position="270"/>
    </location>
    <ligand>
        <name>Mg(2+)</name>
        <dbReference type="ChEBI" id="CHEBI:18420"/>
        <label>1</label>
    </ligand>
</feature>
<feature type="binding site" evidence="2">
    <location>
        <position position="270"/>
    </location>
    <ligand>
        <name>Mg(2+)</name>
        <dbReference type="ChEBI" id="CHEBI:18420"/>
        <label>2</label>
    </ligand>
</feature>
<feature type="binding site" evidence="2">
    <location>
        <position position="272"/>
    </location>
    <ligand>
        <name>Mg(2+)</name>
        <dbReference type="ChEBI" id="CHEBI:18420"/>
        <label>2</label>
    </ligand>
</feature>